<comment type="function">
    <text evidence="5 6 7 8 10 11 12 16">E3 ubiquitin-protein ligase that regulates several biological processes through the ubiquitin-mediated proteasomal degradation of various target proteins. Ubiquitinates the caspases CASP8 and CASP10, promoting their proteasomal degradation, to negatively regulate cell death downstream of death domain receptors in the extrinsic pathway of apoptosis (PubMed:15069192). May mediate 'Lys-48'-linked polyubiquitination of RIPK1 and its subsequent proteasomal degradation thereby indirectly regulating the tumor necrosis factor-mediated signaling pathway (Ref.13). Negatively regulates p53/TP53 through its direct ubiquitination and targeting to proteasomal degradation (PubMed:17121812). Indirectly, may also negatively regulate p53/TP53 through ubiquitination and degradation of SFN (PubMed:18382127). Mediates PPARGC1A proteasomal degradation probably through ubiquitination thereby indirectly regulating the metabolism of brown fat cells (PubMed:22064484). Possibly involved in innate immunity, through 'Lys-48'-linked polyubiquitination of NOD1 and its subsequent proteasomal degradation (PubMed:25012219).</text>
</comment>
<comment type="catalytic activity">
    <reaction evidence="11 12">
        <text>S-ubiquitinyl-[E2 ubiquitin-conjugating enzyme]-L-cysteine + [acceptor protein]-L-lysine = [E2 ubiquitin-conjugating enzyme]-L-cysteine + N(6)-ubiquitinyl-[acceptor protein]-L-lysine.</text>
        <dbReference type="EC" id="2.3.2.27"/>
    </reaction>
</comment>
<comment type="pathway">
    <text evidence="12">Protein modification; protein ubiquitination.</text>
</comment>
<comment type="subunit">
    <text evidence="5 6 8 9 10 11 20">Interacts with CASP8 and CASP10. Interacts (via RING-type zinc finger) with PPARGC1A. Interacts with NOD1. Interacts with p53/TP53; involved in p53/TP53 ubiquitination. Interacts (via RING-type zinc finger) with MDM2; the interaction stabilizes MDM2.</text>
</comment>
<comment type="interaction">
    <interactant intactId="EBI-2340642">
        <id>Q969K3</id>
    </interactant>
    <interactant intactId="EBI-743771">
        <id>Q92624</id>
        <label>APPBP2</label>
    </interactant>
    <organismsDiffer>false</organismsDiffer>
    <experiments>3</experiments>
</comment>
<comment type="interaction">
    <interactant intactId="EBI-2340642">
        <id>Q969K3</id>
    </interactant>
    <interactant intactId="EBI-78060">
        <id>Q14790</id>
        <label>CASP8</label>
    </interactant>
    <organismsDiffer>false</organismsDiffer>
    <experiments>3</experiments>
</comment>
<comment type="interaction">
    <interactant intactId="EBI-2340642">
        <id>Q969K3</id>
    </interactant>
    <interactant intactId="EBI-6875961">
        <id>P02489</id>
        <label>CRYAA</label>
    </interactant>
    <organismsDiffer>false</organismsDiffer>
    <experiments>3</experiments>
</comment>
<comment type="interaction">
    <interactant intactId="EBI-2340642">
        <id>Q969K3</id>
    </interactant>
    <interactant intactId="EBI-10976677">
        <id>G5E9A7</id>
        <label>DMWD</label>
    </interactant>
    <organismsDiffer>false</organismsDiffer>
    <experiments>3</experiments>
</comment>
<comment type="interaction">
    <interactant intactId="EBI-2340642">
        <id>Q969K3</id>
    </interactant>
    <interactant intactId="EBI-750300">
        <id>Q01658</id>
        <label>DR1</label>
    </interactant>
    <organismsDiffer>false</organismsDiffer>
    <experiments>3</experiments>
</comment>
<comment type="interaction">
    <interactant intactId="EBI-2340642">
        <id>Q969K3</id>
    </interactant>
    <interactant intactId="EBI-25913156">
        <id>O14908-2</id>
        <label>GIPC1</label>
    </interactant>
    <organismsDiffer>false</organismsDiffer>
    <experiments>3</experiments>
</comment>
<comment type="interaction">
    <interactant intactId="EBI-2340642">
        <id>Q969K3</id>
    </interactant>
    <interactant intactId="EBI-1955541">
        <id>Q53GS7</id>
        <label>GLE1</label>
    </interactant>
    <organismsDiffer>false</organismsDiffer>
    <experiments>3</experiments>
</comment>
<comment type="interaction">
    <interactant intactId="EBI-2340642">
        <id>Q969K3</id>
    </interactant>
    <interactant intactId="EBI-1054873">
        <id>Q9Y5Q9</id>
        <label>GTF3C3</label>
    </interactant>
    <organismsDiffer>false</organismsDiffer>
    <experiments>3</experiments>
</comment>
<comment type="interaction">
    <interactant intactId="EBI-2340642">
        <id>Q969K3</id>
    </interactant>
    <interactant intactId="EBI-2432309">
        <id>Q92876</id>
        <label>KLK6</label>
    </interactant>
    <organismsDiffer>false</organismsDiffer>
    <experiments>3</experiments>
</comment>
<comment type="interaction">
    <interactant intactId="EBI-2340642">
        <id>Q969K3</id>
    </interactant>
    <interactant intactId="EBI-25929070">
        <id>Q9BZ23-2</id>
        <label>PANK2</label>
    </interactant>
    <organismsDiffer>false</organismsDiffer>
    <experiments>3</experiments>
</comment>
<comment type="interaction">
    <interactant intactId="EBI-2340642">
        <id>Q969K3</id>
    </interactant>
    <interactant intactId="EBI-5235340">
        <id>Q7Z699</id>
        <label>SPRED1</label>
    </interactant>
    <organismsDiffer>false</organismsDiffer>
    <experiments>3</experiments>
</comment>
<comment type="subcellular location">
    <subcellularLocation>
        <location evidence="6">Cell membrane</location>
        <topology evidence="20">Peripheral membrane protein</topology>
    </subcellularLocation>
    <subcellularLocation>
        <location evidence="1">Endomembrane system</location>
        <topology evidence="1">Peripheral membrane protein</topology>
    </subcellularLocation>
    <subcellularLocation>
        <location evidence="10">Nucleus</location>
    </subcellularLocation>
    <subcellularLocation>
        <location evidence="5">Nucleus speckle</location>
    </subcellularLocation>
    <subcellularLocation>
        <location evidence="6">Cytoplasm</location>
        <location evidence="6">Cytosol</location>
    </subcellularLocation>
</comment>
<comment type="alternative products">
    <event type="alternative splicing"/>
    <isoform>
        <id>Q969K3-1</id>
        <name>1</name>
        <sequence type="displayed"/>
    </isoform>
    <isoform>
        <id>Q969K3-2</id>
        <name>2</name>
        <sequence type="described" ref="VSP_038341"/>
    </isoform>
</comment>
<comment type="tissue specificity">
    <text evidence="5 6">Ubiquitous. Detected in heart, brain, liver, skeletal muscle, kidney, pancreas, spleen, thymus, prostate, testis, ovary, colon and leukocytes.</text>
</comment>
<comment type="domain">
    <text evidence="18">The RING-type zinc finger is required for the ubiquitination of target proteins.</text>
</comment>
<comment type="domain">
    <text evidence="15">The FYVE-type zinc finger domain is required for localization and may confer affinity for cellular compartments enriched in phosphatidylinositol 5-phosphate and phosphatidylinositol 3-phosphate phospholipids.</text>
</comment>
<comment type="PTM">
    <text evidence="1">Autoubiquitinated (in vitro).</text>
</comment>
<comment type="PTM">
    <text evidence="5">Proteolytically cleaved by caspases upon induction of apoptosis by TNF.</text>
</comment>
<comment type="sequence caution" evidence="20">
    <conflict type="miscellaneous discrepancy">
        <sequence resource="EMBL-CDS" id="BAH14169"/>
    </conflict>
    <text>Intron retention.</text>
</comment>
<sequence>MKAGATSMWASCCGLLNEVMGTGAVRGQQSAFAGATGPFRFTPNPEFSTYPPAATEGPNIVCKACGLSFSVFRKKHVCCDCKKDFCSVCSVLQENLRRCSTCHLLQETAFQRPQLMRLKVKDLRQYLILRNIPIDTCREKEDLVDLVLCHHGLGSEDDMDTSSLNSSRSQTSSFFTRSFFSNYTAPSATMSSFQGELMDGDQTSRSGVPAQVQSEITSANTEDDDDDDDEDDDDEEENAEDRNPGLSKERVRASLSDLSSLDDVEGMSVRQLKEILARNFVNYSGCCEKWELVEKVNRLYKENEENQKSYGERLQLQDEEDDSLCRICMDAVIDCVLLECGHMVTCTKCGKRMSECPICRQYVVRAVHVFKS</sequence>
<gene>
    <name evidence="21" type="primary">RNF34</name>
</gene>
<name>RNF34_HUMAN</name>
<reference key="1">
    <citation type="journal article" date="2002" name="Oncogene">
        <title>Isolation and characterization of a novel gene, hRFI, preferentially expressed in esophageal cancer.</title>
        <authorList>
            <person name="Sasaki S."/>
            <person name="Nakamura T."/>
            <person name="Arakawa H."/>
            <person name="Mori M."/>
            <person name="Watanabe T."/>
            <person name="Nagawa H."/>
            <person name="Croce C.M."/>
        </authorList>
    </citation>
    <scope>NUCLEOTIDE SEQUENCE [MRNA] (ISOFORM 2)</scope>
    <scope>FUNCTION</scope>
    <scope>SUBCELLULAR LOCATION</scope>
    <scope>CLEAVAGE BY CASPASE-3</scope>
    <scope>TISSUE SPECIFICITY</scope>
</reference>
<reference key="2">
    <citation type="submission" date="2000-09" db="EMBL/GenBank/DDBJ databases">
        <title>Cloning of RIFF, a novel RING finger FYVE finger protein expressed in human fetal brain.</title>
        <authorList>
            <person name="Olsson P.-A."/>
            <person name="Lindholm D."/>
        </authorList>
    </citation>
    <scope>NUCLEOTIDE SEQUENCE [MRNA] (ISOFORM 1)</scope>
    <source>
        <tissue>Brain</tissue>
    </source>
</reference>
<reference key="3">
    <citation type="submission" date="2002-04" db="EMBL/GenBank/DDBJ databases">
        <authorList>
            <person name="Kanbe D."/>
            <person name="Araki K."/>
            <person name="Nawa H."/>
        </authorList>
    </citation>
    <scope>NUCLEOTIDE SEQUENCE [MRNA] (ISOFORM 1)</scope>
</reference>
<reference key="4">
    <citation type="journal article" date="2004" name="Nat. Genet.">
        <title>Complete sequencing and characterization of 21,243 full-length human cDNAs.</title>
        <authorList>
            <person name="Ota T."/>
            <person name="Suzuki Y."/>
            <person name="Nishikawa T."/>
            <person name="Otsuki T."/>
            <person name="Sugiyama T."/>
            <person name="Irie R."/>
            <person name="Wakamatsu A."/>
            <person name="Hayashi K."/>
            <person name="Sato H."/>
            <person name="Nagai K."/>
            <person name="Kimura K."/>
            <person name="Makita H."/>
            <person name="Sekine M."/>
            <person name="Obayashi M."/>
            <person name="Nishi T."/>
            <person name="Shibahara T."/>
            <person name="Tanaka T."/>
            <person name="Ishii S."/>
            <person name="Yamamoto J."/>
            <person name="Saito K."/>
            <person name="Kawai Y."/>
            <person name="Isono Y."/>
            <person name="Nakamura Y."/>
            <person name="Nagahari K."/>
            <person name="Murakami K."/>
            <person name="Yasuda T."/>
            <person name="Iwayanagi T."/>
            <person name="Wagatsuma M."/>
            <person name="Shiratori A."/>
            <person name="Sudo H."/>
            <person name="Hosoiri T."/>
            <person name="Kaku Y."/>
            <person name="Kodaira H."/>
            <person name="Kondo H."/>
            <person name="Sugawara M."/>
            <person name="Takahashi M."/>
            <person name="Kanda K."/>
            <person name="Yokoi T."/>
            <person name="Furuya T."/>
            <person name="Kikkawa E."/>
            <person name="Omura Y."/>
            <person name="Abe K."/>
            <person name="Kamihara K."/>
            <person name="Katsuta N."/>
            <person name="Sato K."/>
            <person name="Tanikawa M."/>
            <person name="Yamazaki M."/>
            <person name="Ninomiya K."/>
            <person name="Ishibashi T."/>
            <person name="Yamashita H."/>
            <person name="Murakawa K."/>
            <person name="Fujimori K."/>
            <person name="Tanai H."/>
            <person name="Kimata M."/>
            <person name="Watanabe M."/>
            <person name="Hiraoka S."/>
            <person name="Chiba Y."/>
            <person name="Ishida S."/>
            <person name="Ono Y."/>
            <person name="Takiguchi S."/>
            <person name="Watanabe S."/>
            <person name="Yosida M."/>
            <person name="Hotuta T."/>
            <person name="Kusano J."/>
            <person name="Kanehori K."/>
            <person name="Takahashi-Fujii A."/>
            <person name="Hara H."/>
            <person name="Tanase T.-O."/>
            <person name="Nomura Y."/>
            <person name="Togiya S."/>
            <person name="Komai F."/>
            <person name="Hara R."/>
            <person name="Takeuchi K."/>
            <person name="Arita M."/>
            <person name="Imose N."/>
            <person name="Musashino K."/>
            <person name="Yuuki H."/>
            <person name="Oshima A."/>
            <person name="Sasaki N."/>
            <person name="Aotsuka S."/>
            <person name="Yoshikawa Y."/>
            <person name="Matsunawa H."/>
            <person name="Ichihara T."/>
            <person name="Shiohata N."/>
            <person name="Sano S."/>
            <person name="Moriya S."/>
            <person name="Momiyama H."/>
            <person name="Satoh N."/>
            <person name="Takami S."/>
            <person name="Terashima Y."/>
            <person name="Suzuki O."/>
            <person name="Nakagawa S."/>
            <person name="Senoh A."/>
            <person name="Mizoguchi H."/>
            <person name="Goto Y."/>
            <person name="Shimizu F."/>
            <person name="Wakebe H."/>
            <person name="Hishigaki H."/>
            <person name="Watanabe T."/>
            <person name="Sugiyama A."/>
            <person name="Takemoto M."/>
            <person name="Kawakami B."/>
            <person name="Yamazaki M."/>
            <person name="Watanabe K."/>
            <person name="Kumagai A."/>
            <person name="Itakura S."/>
            <person name="Fukuzumi Y."/>
            <person name="Fujimori Y."/>
            <person name="Komiyama M."/>
            <person name="Tashiro H."/>
            <person name="Tanigami A."/>
            <person name="Fujiwara T."/>
            <person name="Ono T."/>
            <person name="Yamada K."/>
            <person name="Fujii Y."/>
            <person name="Ozaki K."/>
            <person name="Hirao M."/>
            <person name="Ohmori Y."/>
            <person name="Kawabata A."/>
            <person name="Hikiji T."/>
            <person name="Kobatake N."/>
            <person name="Inagaki H."/>
            <person name="Ikema Y."/>
            <person name="Okamoto S."/>
            <person name="Okitani R."/>
            <person name="Kawakami T."/>
            <person name="Noguchi S."/>
            <person name="Itoh T."/>
            <person name="Shigeta K."/>
            <person name="Senba T."/>
            <person name="Matsumura K."/>
            <person name="Nakajima Y."/>
            <person name="Mizuno T."/>
            <person name="Morinaga M."/>
            <person name="Sasaki M."/>
            <person name="Togashi T."/>
            <person name="Oyama M."/>
            <person name="Hata H."/>
            <person name="Watanabe M."/>
            <person name="Komatsu T."/>
            <person name="Mizushima-Sugano J."/>
            <person name="Satoh T."/>
            <person name="Shirai Y."/>
            <person name="Takahashi Y."/>
            <person name="Nakagawa K."/>
            <person name="Okumura K."/>
            <person name="Nagase T."/>
            <person name="Nomura N."/>
            <person name="Kikuchi H."/>
            <person name="Masuho Y."/>
            <person name="Yamashita R."/>
            <person name="Nakai K."/>
            <person name="Yada T."/>
            <person name="Nakamura Y."/>
            <person name="Ohara O."/>
            <person name="Isogai T."/>
            <person name="Sugano S."/>
        </authorList>
    </citation>
    <scope>NUCLEOTIDE SEQUENCE [LARGE SCALE MRNA] (ISOFORMS 1 AND 2)</scope>
    <source>
        <tissue>Trachea</tissue>
    </source>
</reference>
<reference key="5">
    <citation type="submission" date="2003-05" db="EMBL/GenBank/DDBJ databases">
        <title>Cloning of human full-length CDSs in BD Creator(TM) system donor vector.</title>
        <authorList>
            <person name="Kalnine N."/>
            <person name="Chen X."/>
            <person name="Rolfs A."/>
            <person name="Halleck A."/>
            <person name="Hines L."/>
            <person name="Eisenstein S."/>
            <person name="Koundinya M."/>
            <person name="Raphael J."/>
            <person name="Moreira D."/>
            <person name="Kelley T."/>
            <person name="LaBaer J."/>
            <person name="Lin Y."/>
            <person name="Phelan M."/>
            <person name="Farmer A."/>
        </authorList>
    </citation>
    <scope>NUCLEOTIDE SEQUENCE [LARGE SCALE MRNA] (ISOFORM 1)</scope>
</reference>
<reference key="6">
    <citation type="submission" date="2004-06" db="EMBL/GenBank/DDBJ databases">
        <title>Cloning of human full open reading frames in Gateway(TM) system entry vector (pDONR201).</title>
        <authorList>
            <person name="Ebert L."/>
            <person name="Schick M."/>
            <person name="Neubert P."/>
            <person name="Schatten R."/>
            <person name="Henze S."/>
            <person name="Korn B."/>
        </authorList>
    </citation>
    <scope>NUCLEOTIDE SEQUENCE [LARGE SCALE MRNA] (ISOFORM 1)</scope>
</reference>
<reference key="7">
    <citation type="journal article" date="2004" name="Genome Res.">
        <title>The status, quality, and expansion of the NIH full-length cDNA project: the Mammalian Gene Collection (MGC).</title>
        <authorList>
            <consortium name="The MGC Project Team"/>
        </authorList>
    </citation>
    <scope>NUCLEOTIDE SEQUENCE [LARGE SCALE MRNA] (ISOFORM 1)</scope>
    <source>
        <tissue>Kidney</tissue>
    </source>
</reference>
<reference key="8">
    <citation type="journal article" date="2004" name="Proc. Natl. Acad. Sci. U.S.A.">
        <title>Suppression of caspase-8- and -10-associated RING proteins results in sensitization to death ligands and inhibition of tumor cell growth.</title>
        <authorList>
            <person name="McDonald E.R. III"/>
            <person name="El-Deiry W.S."/>
        </authorList>
    </citation>
    <scope>FUNCTION</scope>
    <scope>INTERACTION WITH CASP8 AND CASP10</scope>
    <scope>MUTAGENESIS OF HIS-342</scope>
    <scope>PROTEOLYTIC DEGRADATION</scope>
    <scope>SUBCELLULAR LOCATION</scope>
    <scope>TISSUE SPECIFICITY</scope>
</reference>
<reference key="9">
    <citation type="journal article" date="2005" name="Mol. Cancer Ther.">
        <title>Overexpression of hRFI (human RING finger homologous to inhibitor of apoptosis protein type) inhibits death receptor-mediated apoptosis in colorectal cancer cells.</title>
        <authorList>
            <person name="Konishi T."/>
            <person name="Sasaki S."/>
            <person name="Watanabe T."/>
            <person name="Kitayama J."/>
            <person name="Nagawa H."/>
        </authorList>
    </citation>
    <scope>FUNCTION</scope>
</reference>
<reference key="10">
    <citation type="journal article" date="2007" name="J. Biol. Chem.">
        <title>CARPs are ubiquitin ligases that promote MDM2-independent p53 and phospho-p53ser20 degradation.</title>
        <authorList>
            <person name="Yang W."/>
            <person name="Rozan L.M."/>
            <person name="McDonald E.R. III"/>
            <person name="Navaraj A."/>
            <person name="Liu J.J."/>
            <person name="Matthew E.M."/>
            <person name="Wang W."/>
            <person name="Dicker D.T."/>
            <person name="El-Deiry W.S."/>
        </authorList>
    </citation>
    <scope>FUNCTION</scope>
    <scope>INTERACTION WITH P53/TP53</scope>
</reference>
<reference key="11">
    <citation type="journal article" date="2008" name="Cell Cycle">
        <title>CARPs enhance p53 turnover by degrading 14-3-3sigma and stabilizing MDM2.</title>
        <authorList>
            <person name="Yang W."/>
            <person name="Dicker D.T."/>
            <person name="Chen J."/>
            <person name="El-Deiry W.S."/>
        </authorList>
    </citation>
    <scope>FUNCTION</scope>
    <scope>INTERACTION WITH MDM2 AND P53/TP53</scope>
</reference>
<reference key="12">
    <citation type="journal article" date="2008" name="Proc. Natl. Acad. Sci. U.S.A.">
        <title>A quantitative atlas of mitotic phosphorylation.</title>
        <authorList>
            <person name="Dephoure N."/>
            <person name="Zhou C."/>
            <person name="Villen J."/>
            <person name="Beausoleil S.A."/>
            <person name="Bakalarski C.E."/>
            <person name="Elledge S.J."/>
            <person name="Gygi S.P."/>
        </authorList>
    </citation>
    <scope>PHOSPHORYLATION [LARGE SCALE ANALYSIS] AT SER-254</scope>
    <scope>IDENTIFICATION BY MASS SPECTROMETRY [LARGE SCALE ANALYSIS]</scope>
    <source>
        <tissue>Cervix carcinoma</tissue>
    </source>
</reference>
<reference key="13">
    <citation type="journal article" date="2009" name="Curr. Biol.">
        <title>Response: CARP1 regulates induction of NF-kappaB by TNFalpha.</title>
        <authorList>
            <person name="Liao W."/>
            <person name="Fujita K."/>
            <person name="Xiao Q."/>
            <person name="Tchikov V."/>
            <person name="Yang W."/>
            <person name="Gunsor M."/>
            <person name="Garfield S."/>
            <person name="Goldsmith P."/>
            <person name="El-Deiry W.S."/>
            <person name="Schuetze S."/>
            <person name="Srinivasula S.M."/>
        </authorList>
    </citation>
    <scope>FUNCTION</scope>
    <scope>INTERACTION WITH RIPK1</scope>
    <scope>PATHWAY</scope>
</reference>
<reference key="14">
    <citation type="journal article" date="2009" name="Sci. Signal.">
        <title>Quantitative phosphoproteomic analysis of T cell receptor signaling reveals system-wide modulation of protein-protein interactions.</title>
        <authorList>
            <person name="Mayya V."/>
            <person name="Lundgren D.H."/>
            <person name="Hwang S.-I."/>
            <person name="Rezaul K."/>
            <person name="Wu L."/>
            <person name="Eng J.K."/>
            <person name="Rodionov V."/>
            <person name="Han D.K."/>
        </authorList>
    </citation>
    <scope>PHOSPHORYLATION [LARGE SCALE ANALYSIS] AT SER-254</scope>
    <scope>IDENTIFICATION BY MASS SPECTROMETRY [LARGE SCALE ANALYSIS]</scope>
    <source>
        <tissue>Leukemic T-cell</tissue>
    </source>
</reference>
<reference key="15">
    <citation type="journal article" date="2010" name="Sci. Signal.">
        <title>Quantitative phosphoproteomics reveals widespread full phosphorylation site occupancy during mitosis.</title>
        <authorList>
            <person name="Olsen J.V."/>
            <person name="Vermeulen M."/>
            <person name="Santamaria A."/>
            <person name="Kumar C."/>
            <person name="Miller M.L."/>
            <person name="Jensen L.J."/>
            <person name="Gnad F."/>
            <person name="Cox J."/>
            <person name="Jensen T.S."/>
            <person name="Nigg E.A."/>
            <person name="Brunak S."/>
            <person name="Mann M."/>
        </authorList>
    </citation>
    <scope>IDENTIFICATION BY MASS SPECTROMETRY [LARGE SCALE ANALYSIS]</scope>
    <source>
        <tissue>Cervix carcinoma</tissue>
    </source>
</reference>
<reference key="16">
    <citation type="journal article" date="2012" name="Mol. Cell. Biol.">
        <title>RNF34 is a cold-regulated E3 ubiquitin ligase for PGC-1alpha and modulates brown fat cell metabolism.</title>
        <authorList>
            <person name="Wei P."/>
            <person name="Pan D."/>
            <person name="Mao C."/>
            <person name="Wang Y.X."/>
        </authorList>
    </citation>
    <scope>FUNCTION</scope>
    <scope>INTERACTION WITH PPARGC1A</scope>
    <scope>SUBCELLULAR LOCATION</scope>
    <scope>MUTAGENESIS OF CYS-328</scope>
</reference>
<reference key="17">
    <citation type="journal article" date="2013" name="J. Proteome Res.">
        <title>Toward a comprehensive characterization of a human cancer cell phosphoproteome.</title>
        <authorList>
            <person name="Zhou H."/>
            <person name="Di Palma S."/>
            <person name="Preisinger C."/>
            <person name="Peng M."/>
            <person name="Polat A.N."/>
            <person name="Heck A.J."/>
            <person name="Mohammed S."/>
        </authorList>
    </citation>
    <scope>PHOSPHORYLATION [LARGE SCALE ANALYSIS] AT SER-169 AND SER-254</scope>
    <scope>IDENTIFICATION BY MASS SPECTROMETRY [LARGE SCALE ANALYSIS]</scope>
    <source>
        <tissue>Cervix carcinoma</tissue>
        <tissue>Erythroleukemia</tissue>
    </source>
</reference>
<reference key="18">
    <citation type="journal article" date="2014" name="Cell. Physiol. Biochem.">
        <title>The E3 ligase RNF34 is a novel negative regulator of the NOD1 pathway.</title>
        <authorList>
            <person name="Zhang R."/>
            <person name="Zhao J."/>
            <person name="Song Y."/>
            <person name="Wang X."/>
            <person name="Wang L."/>
            <person name="Xu J."/>
            <person name="Song C."/>
            <person name="Liu F."/>
        </authorList>
    </citation>
    <scope>FUNCTION</scope>
    <scope>INTERACTION WITH NOD1</scope>
</reference>
<feature type="chain" id="PRO_0000056072" description="E3 ubiquitin-protein ligase RNF34">
    <location>
        <begin position="1"/>
        <end position="372"/>
    </location>
</feature>
<feature type="domain" description="SAP 1">
    <location>
        <begin position="115"/>
        <end position="134"/>
    </location>
</feature>
<feature type="domain" description="SAP 2">
    <location>
        <begin position="264"/>
        <end position="278"/>
    </location>
</feature>
<feature type="zinc finger region" description="FYVE-type">
    <location>
        <begin position="56"/>
        <end position="107"/>
    </location>
</feature>
<feature type="zinc finger region" description="RING-type" evidence="3">
    <location>
        <begin position="325"/>
        <end position="360"/>
    </location>
</feature>
<feature type="region of interest" description="Disordered" evidence="4">
    <location>
        <begin position="194"/>
        <end position="253"/>
    </location>
</feature>
<feature type="compositionally biased region" description="Polar residues" evidence="4">
    <location>
        <begin position="201"/>
        <end position="220"/>
    </location>
</feature>
<feature type="compositionally biased region" description="Acidic residues" evidence="4">
    <location>
        <begin position="221"/>
        <end position="239"/>
    </location>
</feature>
<feature type="compositionally biased region" description="Basic and acidic residues" evidence="4">
    <location>
        <begin position="240"/>
        <end position="252"/>
    </location>
</feature>
<feature type="site" description="Cleavage; by caspase-3" evidence="5">
    <location>
        <begin position="232"/>
        <end position="233"/>
    </location>
</feature>
<feature type="modified residue" description="Phosphoserine" evidence="24">
    <location>
        <position position="169"/>
    </location>
</feature>
<feature type="modified residue" description="Phosphoserine" evidence="22 23 24">
    <location>
        <position position="254"/>
    </location>
</feature>
<feature type="modified residue" description="Phosphoserine" evidence="2">
    <location>
        <position position="256"/>
    </location>
</feature>
<feature type="splice variant" id="VSP_038341" description="In isoform 2." evidence="13 14">
    <original>M</original>
    <variation>MR</variation>
    <location>
        <position position="1"/>
    </location>
</feature>
<feature type="mutagenesis site" description="Loss of E3 ubiquitin protein ligase activity." evidence="17">
    <original>C</original>
    <variation>A</variation>
    <location>
        <position position="328"/>
    </location>
</feature>
<feature type="mutagenesis site" description="Loss of E3 ubiquitin protein ligase activity." evidence="6">
    <original>H</original>
    <variation>A</variation>
    <location>
        <position position="342"/>
    </location>
</feature>
<feature type="sequence conflict" description="In Ref. 4; BAB15132." evidence="20" ref="4">
    <original>Y</original>
    <variation>C</variation>
    <location>
        <position position="183"/>
    </location>
</feature>
<feature type="sequence conflict" description="In Ref. 4; BAB15132." evidence="20" ref="4">
    <original>N</original>
    <variation>D</variation>
    <location>
        <position position="238"/>
    </location>
</feature>
<feature type="sequence conflict" description="In Ref. 4; BAB15132." evidence="20" ref="4">
    <original>I</original>
    <variation>V</variation>
    <location>
        <position position="333"/>
    </location>
</feature>
<proteinExistence type="evidence at protein level"/>
<keyword id="KW-0025">Alternative splicing</keyword>
<keyword id="KW-0053">Apoptosis</keyword>
<keyword id="KW-1003">Cell membrane</keyword>
<keyword id="KW-0963">Cytoplasm</keyword>
<keyword id="KW-0472">Membrane</keyword>
<keyword id="KW-0479">Metal-binding</keyword>
<keyword id="KW-0539">Nucleus</keyword>
<keyword id="KW-0597">Phosphoprotein</keyword>
<keyword id="KW-1267">Proteomics identification</keyword>
<keyword id="KW-1185">Reference proteome</keyword>
<keyword id="KW-0677">Repeat</keyword>
<keyword id="KW-0808">Transferase</keyword>
<keyword id="KW-0832">Ubl conjugation</keyword>
<keyword id="KW-0833">Ubl conjugation pathway</keyword>
<keyword id="KW-0862">Zinc</keyword>
<keyword id="KW-0863">Zinc-finger</keyword>
<accession>Q969K3</accession>
<accession>B7Z933</accession>
<accession>Q8NG47</accession>
<accession>Q9H6W8</accession>
<dbReference type="EC" id="2.3.2.27" evidence="11 12"/>
<dbReference type="EMBL" id="AB084914">
    <property type="protein sequence ID" value="BAC11802.1"/>
    <property type="molecule type" value="mRNA"/>
</dbReference>
<dbReference type="EMBL" id="AF306709">
    <property type="protein sequence ID" value="AAK51328.1"/>
    <property type="molecule type" value="mRNA"/>
</dbReference>
<dbReference type="EMBL" id="AY098934">
    <property type="protein sequence ID" value="AAM29180.1"/>
    <property type="molecule type" value="mRNA"/>
</dbReference>
<dbReference type="EMBL" id="AK304366">
    <property type="protein sequence ID" value="BAH14169.1"/>
    <property type="status" value="ALT_SEQ"/>
    <property type="molecule type" value="mRNA"/>
</dbReference>
<dbReference type="EMBL" id="AK025439">
    <property type="protein sequence ID" value="BAB15132.1"/>
    <property type="molecule type" value="mRNA"/>
</dbReference>
<dbReference type="EMBL" id="BT007283">
    <property type="protein sequence ID" value="AAP35947.1"/>
    <property type="molecule type" value="mRNA"/>
</dbReference>
<dbReference type="EMBL" id="CR457342">
    <property type="protein sequence ID" value="CAG33623.1"/>
    <property type="molecule type" value="mRNA"/>
</dbReference>
<dbReference type="EMBL" id="BC007826">
    <property type="protein sequence ID" value="AAH07826.1"/>
    <property type="molecule type" value="mRNA"/>
</dbReference>
<dbReference type="CCDS" id="CCDS31915.1">
    <molecule id="Q969K3-1"/>
</dbReference>
<dbReference type="CCDS" id="CCDS9221.1">
    <molecule id="Q969K3-2"/>
</dbReference>
<dbReference type="RefSeq" id="NP_001243787.1">
    <property type="nucleotide sequence ID" value="NM_001256858.1"/>
</dbReference>
<dbReference type="RefSeq" id="NP_001381137.1">
    <molecule id="Q969K3-2"/>
    <property type="nucleotide sequence ID" value="NM_001394208.1"/>
</dbReference>
<dbReference type="RefSeq" id="NP_079402.2">
    <molecule id="Q969K3-1"/>
    <property type="nucleotide sequence ID" value="NM_025126.3"/>
</dbReference>
<dbReference type="RefSeq" id="NP_919247.1">
    <molecule id="Q969K3-2"/>
    <property type="nucleotide sequence ID" value="NM_194271.3"/>
</dbReference>
<dbReference type="RefSeq" id="XP_054229254.1">
    <molecule id="Q969K3-2"/>
    <property type="nucleotide sequence ID" value="XM_054373279.1"/>
</dbReference>
<dbReference type="RefSeq" id="XP_054229255.1">
    <molecule id="Q969K3-1"/>
    <property type="nucleotide sequence ID" value="XM_054373280.1"/>
</dbReference>
<dbReference type="SMR" id="Q969K3"/>
<dbReference type="BioGRID" id="123169">
    <property type="interactions" value="59"/>
</dbReference>
<dbReference type="FunCoup" id="Q969K3">
    <property type="interactions" value="4515"/>
</dbReference>
<dbReference type="IntAct" id="Q969K3">
    <property type="interactions" value="39"/>
</dbReference>
<dbReference type="MINT" id="Q969K3"/>
<dbReference type="STRING" id="9606.ENSP00000376258"/>
<dbReference type="iPTMnet" id="Q969K3"/>
<dbReference type="PhosphoSitePlus" id="Q969K3"/>
<dbReference type="BioMuta" id="RNF34"/>
<dbReference type="DMDM" id="74760679"/>
<dbReference type="jPOST" id="Q969K3"/>
<dbReference type="MassIVE" id="Q969K3"/>
<dbReference type="PaxDb" id="9606-ENSP00000376258"/>
<dbReference type="PeptideAtlas" id="Q969K3"/>
<dbReference type="ProteomicsDB" id="75779">
    <molecule id="Q969K3-1"/>
</dbReference>
<dbReference type="ProteomicsDB" id="75780">
    <molecule id="Q969K3-2"/>
</dbReference>
<dbReference type="Pumba" id="Q969K3"/>
<dbReference type="Antibodypedia" id="31576">
    <property type="antibodies" value="291 antibodies from 32 providers"/>
</dbReference>
<dbReference type="DNASU" id="80196"/>
<dbReference type="Ensembl" id="ENST00000361234.10">
    <molecule id="Q969K3-1"/>
    <property type="protein sequence ID" value="ENSP00000355137.5"/>
    <property type="gene ID" value="ENSG00000170633.17"/>
</dbReference>
<dbReference type="Ensembl" id="ENST00000392465.7">
    <molecule id="Q969K3-2"/>
    <property type="protein sequence ID" value="ENSP00000376258.3"/>
    <property type="gene ID" value="ENSG00000170633.17"/>
</dbReference>
<dbReference type="GeneID" id="80196"/>
<dbReference type="KEGG" id="hsa:80196"/>
<dbReference type="MANE-Select" id="ENST00000361234.10">
    <property type="protein sequence ID" value="ENSP00000355137.5"/>
    <property type="RefSeq nucleotide sequence ID" value="NM_025126.4"/>
    <property type="RefSeq protein sequence ID" value="NP_079402.2"/>
</dbReference>
<dbReference type="UCSC" id="uc001uak.3">
    <molecule id="Q969K3-1"/>
    <property type="organism name" value="human"/>
</dbReference>
<dbReference type="AGR" id="HGNC:17297"/>
<dbReference type="CTD" id="80196"/>
<dbReference type="DisGeNET" id="80196"/>
<dbReference type="GeneCards" id="RNF34"/>
<dbReference type="HGNC" id="HGNC:17297">
    <property type="gene designation" value="RNF34"/>
</dbReference>
<dbReference type="HPA" id="ENSG00000170633">
    <property type="expression patterns" value="Low tissue specificity"/>
</dbReference>
<dbReference type="MIM" id="608299">
    <property type="type" value="gene"/>
</dbReference>
<dbReference type="neXtProt" id="NX_Q969K3"/>
<dbReference type="OpenTargets" id="ENSG00000170633"/>
<dbReference type="PharmGKB" id="PA34436"/>
<dbReference type="VEuPathDB" id="HostDB:ENSG00000170633"/>
<dbReference type="eggNOG" id="KOG4275">
    <property type="taxonomic scope" value="Eukaryota"/>
</dbReference>
<dbReference type="GeneTree" id="ENSGT00390000012719"/>
<dbReference type="HOGENOM" id="CLU_041431_1_0_1"/>
<dbReference type="InParanoid" id="Q969K3"/>
<dbReference type="OMA" id="SYSGCCE"/>
<dbReference type="OrthoDB" id="3045089at2759"/>
<dbReference type="PAN-GO" id="Q969K3">
    <property type="GO annotations" value="7 GO annotations based on evolutionary models"/>
</dbReference>
<dbReference type="PhylomeDB" id="Q969K3"/>
<dbReference type="TreeFam" id="TF325195"/>
<dbReference type="PathwayCommons" id="Q969K3"/>
<dbReference type="Reactome" id="R-HSA-6804757">
    <property type="pathway name" value="Regulation of TP53 Degradation"/>
</dbReference>
<dbReference type="Reactome" id="R-HSA-983168">
    <property type="pathway name" value="Antigen processing: Ubiquitination &amp; Proteasome degradation"/>
</dbReference>
<dbReference type="SignaLink" id="Q969K3"/>
<dbReference type="SIGNOR" id="Q969K3"/>
<dbReference type="UniPathway" id="UPA00143"/>
<dbReference type="BioGRID-ORCS" id="80196">
    <property type="hits" value="18 hits in 1199 CRISPR screens"/>
</dbReference>
<dbReference type="CD-CODE" id="91857CE7">
    <property type="entry name" value="Nucleolus"/>
</dbReference>
<dbReference type="ChiTaRS" id="RNF34">
    <property type="organism name" value="human"/>
</dbReference>
<dbReference type="GeneWiki" id="RNF34"/>
<dbReference type="GenomeRNAi" id="80196"/>
<dbReference type="Pharos" id="Q969K3">
    <property type="development level" value="Tbio"/>
</dbReference>
<dbReference type="PRO" id="PR:Q969K3"/>
<dbReference type="Proteomes" id="UP000005640">
    <property type="component" value="Chromosome 12"/>
</dbReference>
<dbReference type="RNAct" id="Q969K3">
    <property type="molecule type" value="protein"/>
</dbReference>
<dbReference type="Bgee" id="ENSG00000170633">
    <property type="expression patterns" value="Expressed in secondary oocyte and 191 other cell types or tissues"/>
</dbReference>
<dbReference type="ExpressionAtlas" id="Q969K3">
    <property type="expression patterns" value="baseline and differential"/>
</dbReference>
<dbReference type="GO" id="GO:0005737">
    <property type="term" value="C:cytoplasm"/>
    <property type="evidence" value="ECO:0000314"/>
    <property type="project" value="UniProtKB"/>
</dbReference>
<dbReference type="GO" id="GO:0005829">
    <property type="term" value="C:cytosol"/>
    <property type="evidence" value="ECO:0007669"/>
    <property type="project" value="UniProtKB-SubCell"/>
</dbReference>
<dbReference type="GO" id="GO:0012505">
    <property type="term" value="C:endomembrane system"/>
    <property type="evidence" value="ECO:0007669"/>
    <property type="project" value="UniProtKB-SubCell"/>
</dbReference>
<dbReference type="GO" id="GO:0016604">
    <property type="term" value="C:nuclear body"/>
    <property type="evidence" value="ECO:0000314"/>
    <property type="project" value="HPA"/>
</dbReference>
<dbReference type="GO" id="GO:0016607">
    <property type="term" value="C:nuclear speck"/>
    <property type="evidence" value="ECO:0007669"/>
    <property type="project" value="UniProtKB-SubCell"/>
</dbReference>
<dbReference type="GO" id="GO:0005654">
    <property type="term" value="C:nucleoplasm"/>
    <property type="evidence" value="ECO:0000314"/>
    <property type="project" value="HPA"/>
</dbReference>
<dbReference type="GO" id="GO:0005634">
    <property type="term" value="C:nucleus"/>
    <property type="evidence" value="ECO:0000314"/>
    <property type="project" value="UniProtKB"/>
</dbReference>
<dbReference type="GO" id="GO:0005886">
    <property type="term" value="C:plasma membrane"/>
    <property type="evidence" value="ECO:0000314"/>
    <property type="project" value="UniProtKB"/>
</dbReference>
<dbReference type="GO" id="GO:0002039">
    <property type="term" value="F:p53 binding"/>
    <property type="evidence" value="ECO:0000353"/>
    <property type="project" value="UniProtKB"/>
</dbReference>
<dbReference type="GO" id="GO:1901981">
    <property type="term" value="F:phosphatidylinositol phosphate binding"/>
    <property type="evidence" value="ECO:0000314"/>
    <property type="project" value="UniProtKB"/>
</dbReference>
<dbReference type="GO" id="GO:0061630">
    <property type="term" value="F:ubiquitin protein ligase activity"/>
    <property type="evidence" value="ECO:0000314"/>
    <property type="project" value="UniProtKB"/>
</dbReference>
<dbReference type="GO" id="GO:0031625">
    <property type="term" value="F:ubiquitin protein ligase binding"/>
    <property type="evidence" value="ECO:0000353"/>
    <property type="project" value="UniProtKB"/>
</dbReference>
<dbReference type="GO" id="GO:0008270">
    <property type="term" value="F:zinc ion binding"/>
    <property type="evidence" value="ECO:0007669"/>
    <property type="project" value="UniProtKB-KW"/>
</dbReference>
<dbReference type="GO" id="GO:0006915">
    <property type="term" value="P:apoptotic process"/>
    <property type="evidence" value="ECO:0007669"/>
    <property type="project" value="UniProtKB-KW"/>
</dbReference>
<dbReference type="GO" id="GO:0070417">
    <property type="term" value="P:cellular response to cold"/>
    <property type="evidence" value="ECO:0007669"/>
    <property type="project" value="Ensembl"/>
</dbReference>
<dbReference type="GO" id="GO:1902042">
    <property type="term" value="P:negative regulation of extrinsic apoptotic signaling pathway via death domain receptors"/>
    <property type="evidence" value="ECO:0000315"/>
    <property type="project" value="UniProtKB"/>
</dbReference>
<dbReference type="GO" id="GO:1901797">
    <property type="term" value="P:negative regulation of signal transduction by p53 class mediator"/>
    <property type="evidence" value="ECO:0000315"/>
    <property type="project" value="UniProtKB"/>
</dbReference>
<dbReference type="GO" id="GO:0035872">
    <property type="term" value="P:nucleotide-binding domain, leucine rich repeat containing receptor signaling pathway"/>
    <property type="evidence" value="ECO:0000315"/>
    <property type="project" value="UniProtKB"/>
</dbReference>
<dbReference type="GO" id="GO:0043161">
    <property type="term" value="P:proteasome-mediated ubiquitin-dependent protein catabolic process"/>
    <property type="evidence" value="ECO:0000314"/>
    <property type="project" value="UniProtKB"/>
</dbReference>
<dbReference type="GO" id="GO:0070936">
    <property type="term" value="P:protein K48-linked ubiquitination"/>
    <property type="evidence" value="ECO:0000315"/>
    <property type="project" value="UniProtKB"/>
</dbReference>
<dbReference type="GO" id="GO:0016567">
    <property type="term" value="P:protein ubiquitination"/>
    <property type="evidence" value="ECO:0000314"/>
    <property type="project" value="UniProtKB"/>
</dbReference>
<dbReference type="GO" id="GO:2000374">
    <property type="term" value="P:regulation of oxygen metabolic process"/>
    <property type="evidence" value="ECO:0000250"/>
    <property type="project" value="UniProtKB"/>
</dbReference>
<dbReference type="GO" id="GO:1901796">
    <property type="term" value="P:regulation of signal transduction by p53 class mediator"/>
    <property type="evidence" value="ECO:0000304"/>
    <property type="project" value="Reactome"/>
</dbReference>
<dbReference type="GO" id="GO:0006511">
    <property type="term" value="P:ubiquitin-dependent protein catabolic process"/>
    <property type="evidence" value="ECO:0000315"/>
    <property type="project" value="UniProtKB"/>
</dbReference>
<dbReference type="CDD" id="cd15769">
    <property type="entry name" value="FYVE_CARP1"/>
    <property type="match status" value="1"/>
</dbReference>
<dbReference type="CDD" id="cd16706">
    <property type="entry name" value="RING-HC_CARP1"/>
    <property type="match status" value="1"/>
</dbReference>
<dbReference type="FunFam" id="1.10.720.140:FF:000001">
    <property type="entry name" value="E3 ubiquitin-protein ligase RNF34 isoform X1"/>
    <property type="match status" value="1"/>
</dbReference>
<dbReference type="FunFam" id="3.30.40.10:FF:000110">
    <property type="entry name" value="E3 ubiquitin-protein ligase RNF34 isoform X1"/>
    <property type="match status" value="1"/>
</dbReference>
<dbReference type="Gene3D" id="1.10.720.140">
    <property type="match status" value="1"/>
</dbReference>
<dbReference type="Gene3D" id="1.10.720.30">
    <property type="entry name" value="SAP domain"/>
    <property type="match status" value="1"/>
</dbReference>
<dbReference type="Gene3D" id="3.30.40.10">
    <property type="entry name" value="Zinc/RING finger domain, C3HC4 (zinc finger)"/>
    <property type="match status" value="1"/>
</dbReference>
<dbReference type="InterPro" id="IPR049320">
    <property type="entry name" value="CARP1_2_FYVE"/>
</dbReference>
<dbReference type="InterPro" id="IPR049323">
    <property type="entry name" value="CARP1_FYVE"/>
</dbReference>
<dbReference type="InterPro" id="IPR051728">
    <property type="entry name" value="RING-FYVE_E3_ubiquitin-ligase"/>
</dbReference>
<dbReference type="InterPro" id="IPR055111">
    <property type="entry name" value="RNF34L-like_HeH"/>
</dbReference>
<dbReference type="InterPro" id="IPR036361">
    <property type="entry name" value="SAP_dom_sf"/>
</dbReference>
<dbReference type="InterPro" id="IPR011011">
    <property type="entry name" value="Znf_FYVE_PHD"/>
</dbReference>
<dbReference type="InterPro" id="IPR001841">
    <property type="entry name" value="Znf_RING"/>
</dbReference>
<dbReference type="InterPro" id="IPR013083">
    <property type="entry name" value="Znf_RING/FYVE/PHD"/>
</dbReference>
<dbReference type="PANTHER" id="PTHR14879">
    <property type="entry name" value="CASPASE REGULATOR, RING FINGER DOMAIN-CONTAINING"/>
    <property type="match status" value="1"/>
</dbReference>
<dbReference type="PANTHER" id="PTHR14879:SF3">
    <property type="entry name" value="E3 UBIQUITIN-PROTEIN LIGASE RNF34"/>
    <property type="match status" value="1"/>
</dbReference>
<dbReference type="Pfam" id="PF21272">
    <property type="entry name" value="FYVE_CARP1-2"/>
    <property type="match status" value="1"/>
</dbReference>
<dbReference type="Pfam" id="PF22968">
    <property type="entry name" value="RNF34L-like_3rd"/>
    <property type="match status" value="1"/>
</dbReference>
<dbReference type="Pfam" id="PF23632">
    <property type="entry name" value="SAP_RNF34_RFFL"/>
    <property type="match status" value="1"/>
</dbReference>
<dbReference type="Pfam" id="PF13920">
    <property type="entry name" value="zf-C3HC4_3"/>
    <property type="match status" value="1"/>
</dbReference>
<dbReference type="SMART" id="SM00184">
    <property type="entry name" value="RING"/>
    <property type="match status" value="1"/>
</dbReference>
<dbReference type="SUPFAM" id="SSF57903">
    <property type="entry name" value="FYVE/PHD zinc finger"/>
    <property type="match status" value="1"/>
</dbReference>
<dbReference type="SUPFAM" id="SSF57850">
    <property type="entry name" value="RING/U-box"/>
    <property type="match status" value="1"/>
</dbReference>
<dbReference type="SUPFAM" id="SSF68906">
    <property type="entry name" value="SAP domain"/>
    <property type="match status" value="1"/>
</dbReference>
<dbReference type="PROSITE" id="PS50089">
    <property type="entry name" value="ZF_RING_2"/>
    <property type="match status" value="1"/>
</dbReference>
<organism>
    <name type="scientific">Homo sapiens</name>
    <name type="common">Human</name>
    <dbReference type="NCBI Taxonomy" id="9606"/>
    <lineage>
        <taxon>Eukaryota</taxon>
        <taxon>Metazoa</taxon>
        <taxon>Chordata</taxon>
        <taxon>Craniata</taxon>
        <taxon>Vertebrata</taxon>
        <taxon>Euteleostomi</taxon>
        <taxon>Mammalia</taxon>
        <taxon>Eutheria</taxon>
        <taxon>Euarchontoglires</taxon>
        <taxon>Primates</taxon>
        <taxon>Haplorrhini</taxon>
        <taxon>Catarrhini</taxon>
        <taxon>Hominidae</taxon>
        <taxon>Homo</taxon>
    </lineage>
</organism>
<protein>
    <recommendedName>
        <fullName evidence="20">E3 ubiquitin-protein ligase RNF34</fullName>
        <ecNumber evidence="11 12">2.3.2.27</ecNumber>
    </recommendedName>
    <alternativeName>
        <fullName evidence="20">Caspase regulator CARP1</fullName>
    </alternativeName>
    <alternativeName>
        <fullName evidence="15">Caspases-8 and -10-associated RING finger protein 1</fullName>
        <shortName evidence="15">CARP-1</shortName>
    </alternativeName>
    <alternativeName>
        <fullName evidence="1">FYVE-RING finger protein Momo</fullName>
    </alternativeName>
    <alternativeName>
        <fullName evidence="13">Human RING finger homologous to inhibitor of apoptosis protein</fullName>
        <shortName evidence="13">hRFI</shortName>
    </alternativeName>
    <alternativeName>
        <fullName evidence="21">RING finger protein 34</fullName>
    </alternativeName>
    <alternativeName>
        <fullName evidence="19">RING finger protein RIFF</fullName>
    </alternativeName>
    <alternativeName>
        <fullName evidence="20">RING-type E3 ubiquitin transferase RNF34</fullName>
    </alternativeName>
</protein>
<evidence type="ECO:0000250" key="1">
    <source>
        <dbReference type="UniProtKB" id="Q6AYH3"/>
    </source>
</evidence>
<evidence type="ECO:0000250" key="2">
    <source>
        <dbReference type="UniProtKB" id="Q99KR6"/>
    </source>
</evidence>
<evidence type="ECO:0000255" key="3">
    <source>
        <dbReference type="PROSITE-ProRule" id="PRU00175"/>
    </source>
</evidence>
<evidence type="ECO:0000256" key="4">
    <source>
        <dbReference type="SAM" id="MobiDB-lite"/>
    </source>
</evidence>
<evidence type="ECO:0000269" key="5">
    <source>
    </source>
</evidence>
<evidence type="ECO:0000269" key="6">
    <source>
    </source>
</evidence>
<evidence type="ECO:0000269" key="7">
    <source>
    </source>
</evidence>
<evidence type="ECO:0000269" key="8">
    <source>
    </source>
</evidence>
<evidence type="ECO:0000269" key="9">
    <source>
    </source>
</evidence>
<evidence type="ECO:0000269" key="10">
    <source>
    </source>
</evidence>
<evidence type="ECO:0000269" key="11">
    <source>
    </source>
</evidence>
<evidence type="ECO:0000269" key="12">
    <source ref="13"/>
</evidence>
<evidence type="ECO:0000303" key="13">
    <source>
    </source>
</evidence>
<evidence type="ECO:0000303" key="14">
    <source>
    </source>
</evidence>
<evidence type="ECO:0000303" key="15">
    <source>
    </source>
</evidence>
<evidence type="ECO:0000303" key="16">
    <source>
    </source>
</evidence>
<evidence type="ECO:0000303" key="17">
    <source>
    </source>
</evidence>
<evidence type="ECO:0000303" key="18">
    <source>
    </source>
</evidence>
<evidence type="ECO:0000303" key="19">
    <source ref="2"/>
</evidence>
<evidence type="ECO:0000305" key="20"/>
<evidence type="ECO:0000312" key="21">
    <source>
        <dbReference type="HGNC" id="HGNC:17297"/>
    </source>
</evidence>
<evidence type="ECO:0007744" key="22">
    <source>
    </source>
</evidence>
<evidence type="ECO:0007744" key="23">
    <source>
    </source>
</evidence>
<evidence type="ECO:0007744" key="24">
    <source>
    </source>
</evidence>